<organism>
    <name type="scientific">Dehalococcoides mccartyi (strain ATCC BAA-2100 / JCM 16839 / KCTC 5957 / BAV1)</name>
    <dbReference type="NCBI Taxonomy" id="216389"/>
    <lineage>
        <taxon>Bacteria</taxon>
        <taxon>Bacillati</taxon>
        <taxon>Chloroflexota</taxon>
        <taxon>Dehalococcoidia</taxon>
        <taxon>Dehalococcoidales</taxon>
        <taxon>Dehalococcoidaceae</taxon>
        <taxon>Dehalococcoides</taxon>
    </lineage>
</organism>
<accession>A5FPS8</accession>
<proteinExistence type="inferred from homology"/>
<dbReference type="EC" id="6.3.4.2" evidence="1"/>
<dbReference type="EMBL" id="CP000688">
    <property type="protein sequence ID" value="ABQ17796.1"/>
    <property type="molecule type" value="Genomic_DNA"/>
</dbReference>
<dbReference type="SMR" id="A5FPS8"/>
<dbReference type="KEGG" id="deb:DehaBAV1_1217"/>
<dbReference type="PATRIC" id="fig|216389.18.peg.1285"/>
<dbReference type="HOGENOM" id="CLU_011675_5_0_0"/>
<dbReference type="UniPathway" id="UPA00159">
    <property type="reaction ID" value="UER00277"/>
</dbReference>
<dbReference type="GO" id="GO:0005829">
    <property type="term" value="C:cytosol"/>
    <property type="evidence" value="ECO:0007669"/>
    <property type="project" value="TreeGrafter"/>
</dbReference>
<dbReference type="GO" id="GO:0005524">
    <property type="term" value="F:ATP binding"/>
    <property type="evidence" value="ECO:0007669"/>
    <property type="project" value="UniProtKB-KW"/>
</dbReference>
<dbReference type="GO" id="GO:0003883">
    <property type="term" value="F:CTP synthase activity"/>
    <property type="evidence" value="ECO:0007669"/>
    <property type="project" value="UniProtKB-UniRule"/>
</dbReference>
<dbReference type="GO" id="GO:0004359">
    <property type="term" value="F:glutaminase activity"/>
    <property type="evidence" value="ECO:0007669"/>
    <property type="project" value="RHEA"/>
</dbReference>
<dbReference type="GO" id="GO:0042802">
    <property type="term" value="F:identical protein binding"/>
    <property type="evidence" value="ECO:0007669"/>
    <property type="project" value="TreeGrafter"/>
</dbReference>
<dbReference type="GO" id="GO:0046872">
    <property type="term" value="F:metal ion binding"/>
    <property type="evidence" value="ECO:0007669"/>
    <property type="project" value="UniProtKB-KW"/>
</dbReference>
<dbReference type="GO" id="GO:0044210">
    <property type="term" value="P:'de novo' CTP biosynthetic process"/>
    <property type="evidence" value="ECO:0007669"/>
    <property type="project" value="UniProtKB-UniRule"/>
</dbReference>
<dbReference type="GO" id="GO:0019856">
    <property type="term" value="P:pyrimidine nucleobase biosynthetic process"/>
    <property type="evidence" value="ECO:0007669"/>
    <property type="project" value="TreeGrafter"/>
</dbReference>
<dbReference type="CDD" id="cd03113">
    <property type="entry name" value="CTPS_N"/>
    <property type="match status" value="1"/>
</dbReference>
<dbReference type="CDD" id="cd01746">
    <property type="entry name" value="GATase1_CTP_Synthase"/>
    <property type="match status" value="1"/>
</dbReference>
<dbReference type="FunFam" id="3.40.50.300:FF:000009">
    <property type="entry name" value="CTP synthase"/>
    <property type="match status" value="1"/>
</dbReference>
<dbReference type="FunFam" id="3.40.50.880:FF:000002">
    <property type="entry name" value="CTP synthase"/>
    <property type="match status" value="1"/>
</dbReference>
<dbReference type="Gene3D" id="3.40.50.880">
    <property type="match status" value="1"/>
</dbReference>
<dbReference type="Gene3D" id="3.40.50.300">
    <property type="entry name" value="P-loop containing nucleotide triphosphate hydrolases"/>
    <property type="match status" value="1"/>
</dbReference>
<dbReference type="HAMAP" id="MF_01227">
    <property type="entry name" value="PyrG"/>
    <property type="match status" value="1"/>
</dbReference>
<dbReference type="InterPro" id="IPR029062">
    <property type="entry name" value="Class_I_gatase-like"/>
</dbReference>
<dbReference type="InterPro" id="IPR004468">
    <property type="entry name" value="CTP_synthase"/>
</dbReference>
<dbReference type="InterPro" id="IPR017456">
    <property type="entry name" value="CTP_synthase_N"/>
</dbReference>
<dbReference type="InterPro" id="IPR017926">
    <property type="entry name" value="GATASE"/>
</dbReference>
<dbReference type="InterPro" id="IPR033828">
    <property type="entry name" value="GATase1_CTP_Synthase"/>
</dbReference>
<dbReference type="InterPro" id="IPR027417">
    <property type="entry name" value="P-loop_NTPase"/>
</dbReference>
<dbReference type="NCBIfam" id="NF003792">
    <property type="entry name" value="PRK05380.1"/>
    <property type="match status" value="1"/>
</dbReference>
<dbReference type="NCBIfam" id="TIGR00337">
    <property type="entry name" value="PyrG"/>
    <property type="match status" value="1"/>
</dbReference>
<dbReference type="PANTHER" id="PTHR11550">
    <property type="entry name" value="CTP SYNTHASE"/>
    <property type="match status" value="1"/>
</dbReference>
<dbReference type="PANTHER" id="PTHR11550:SF0">
    <property type="entry name" value="CTP SYNTHASE-RELATED"/>
    <property type="match status" value="1"/>
</dbReference>
<dbReference type="Pfam" id="PF06418">
    <property type="entry name" value="CTP_synth_N"/>
    <property type="match status" value="1"/>
</dbReference>
<dbReference type="Pfam" id="PF00117">
    <property type="entry name" value="GATase"/>
    <property type="match status" value="1"/>
</dbReference>
<dbReference type="SUPFAM" id="SSF52317">
    <property type="entry name" value="Class I glutamine amidotransferase-like"/>
    <property type="match status" value="1"/>
</dbReference>
<dbReference type="SUPFAM" id="SSF52540">
    <property type="entry name" value="P-loop containing nucleoside triphosphate hydrolases"/>
    <property type="match status" value="1"/>
</dbReference>
<dbReference type="PROSITE" id="PS51273">
    <property type="entry name" value="GATASE_TYPE_1"/>
    <property type="match status" value="1"/>
</dbReference>
<keyword id="KW-0067">ATP-binding</keyword>
<keyword id="KW-0315">Glutamine amidotransferase</keyword>
<keyword id="KW-0436">Ligase</keyword>
<keyword id="KW-0460">Magnesium</keyword>
<keyword id="KW-0479">Metal-binding</keyword>
<keyword id="KW-0547">Nucleotide-binding</keyword>
<keyword id="KW-0665">Pyrimidine biosynthesis</keyword>
<name>PYRG_DEHMB</name>
<feature type="chain" id="PRO_1000139433" description="CTP synthase">
    <location>
        <begin position="1"/>
        <end position="544"/>
    </location>
</feature>
<feature type="domain" description="Glutamine amidotransferase type-1" evidence="1">
    <location>
        <begin position="299"/>
        <end position="534"/>
    </location>
</feature>
<feature type="region of interest" description="Amidoligase domain" evidence="1">
    <location>
        <begin position="1"/>
        <end position="267"/>
    </location>
</feature>
<feature type="active site" description="Nucleophile; for glutamine hydrolysis" evidence="1">
    <location>
        <position position="381"/>
    </location>
</feature>
<feature type="active site" evidence="1">
    <location>
        <position position="507"/>
    </location>
</feature>
<feature type="active site" evidence="1">
    <location>
        <position position="509"/>
    </location>
</feature>
<feature type="binding site" evidence="1">
    <location>
        <position position="13"/>
    </location>
    <ligand>
        <name>CTP</name>
        <dbReference type="ChEBI" id="CHEBI:37563"/>
        <note>allosteric inhibitor</note>
    </ligand>
</feature>
<feature type="binding site" evidence="1">
    <location>
        <position position="13"/>
    </location>
    <ligand>
        <name>UTP</name>
        <dbReference type="ChEBI" id="CHEBI:46398"/>
    </ligand>
</feature>
<feature type="binding site" evidence="1">
    <location>
        <begin position="14"/>
        <end position="19"/>
    </location>
    <ligand>
        <name>ATP</name>
        <dbReference type="ChEBI" id="CHEBI:30616"/>
    </ligand>
</feature>
<feature type="binding site" evidence="1">
    <location>
        <position position="54"/>
    </location>
    <ligand>
        <name>L-glutamine</name>
        <dbReference type="ChEBI" id="CHEBI:58359"/>
    </ligand>
</feature>
<feature type="binding site" evidence="1">
    <location>
        <position position="71"/>
    </location>
    <ligand>
        <name>ATP</name>
        <dbReference type="ChEBI" id="CHEBI:30616"/>
    </ligand>
</feature>
<feature type="binding site" evidence="1">
    <location>
        <position position="71"/>
    </location>
    <ligand>
        <name>Mg(2+)</name>
        <dbReference type="ChEBI" id="CHEBI:18420"/>
    </ligand>
</feature>
<feature type="binding site" evidence="1">
    <location>
        <position position="141"/>
    </location>
    <ligand>
        <name>Mg(2+)</name>
        <dbReference type="ChEBI" id="CHEBI:18420"/>
    </ligand>
</feature>
<feature type="binding site" evidence="1">
    <location>
        <begin position="148"/>
        <end position="150"/>
    </location>
    <ligand>
        <name>CTP</name>
        <dbReference type="ChEBI" id="CHEBI:37563"/>
        <note>allosteric inhibitor</note>
    </ligand>
</feature>
<feature type="binding site" evidence="1">
    <location>
        <begin position="188"/>
        <end position="193"/>
    </location>
    <ligand>
        <name>CTP</name>
        <dbReference type="ChEBI" id="CHEBI:37563"/>
        <note>allosteric inhibitor</note>
    </ligand>
</feature>
<feature type="binding site" evidence="1">
    <location>
        <begin position="188"/>
        <end position="193"/>
    </location>
    <ligand>
        <name>UTP</name>
        <dbReference type="ChEBI" id="CHEBI:46398"/>
    </ligand>
</feature>
<feature type="binding site" evidence="1">
    <location>
        <position position="224"/>
    </location>
    <ligand>
        <name>CTP</name>
        <dbReference type="ChEBI" id="CHEBI:37563"/>
        <note>allosteric inhibitor</note>
    </ligand>
</feature>
<feature type="binding site" evidence="1">
    <location>
        <position position="224"/>
    </location>
    <ligand>
        <name>UTP</name>
        <dbReference type="ChEBI" id="CHEBI:46398"/>
    </ligand>
</feature>
<feature type="binding site" evidence="1">
    <location>
        <position position="354"/>
    </location>
    <ligand>
        <name>L-glutamine</name>
        <dbReference type="ChEBI" id="CHEBI:58359"/>
    </ligand>
</feature>
<feature type="binding site" evidence="1">
    <location>
        <begin position="382"/>
        <end position="385"/>
    </location>
    <ligand>
        <name>L-glutamine</name>
        <dbReference type="ChEBI" id="CHEBI:58359"/>
    </ligand>
</feature>
<feature type="binding site" evidence="1">
    <location>
        <position position="405"/>
    </location>
    <ligand>
        <name>L-glutamine</name>
        <dbReference type="ChEBI" id="CHEBI:58359"/>
    </ligand>
</feature>
<feature type="binding site" evidence="1">
    <location>
        <position position="462"/>
    </location>
    <ligand>
        <name>L-glutamine</name>
        <dbReference type="ChEBI" id="CHEBI:58359"/>
    </ligand>
</feature>
<sequence length="544" mass="60362">MSKFIFVTGGVVSSVGKGITVASLGNILKSRGLSVSVQKLDPYLNVDPGTMSPYQHGEVFVTQDGAETDLDLGSYERFIDIELTADSTVTSGQVYSEVINKERRGDYLGGTIQVVPHVTQEIKARIQRLADRSKADVVIVEVGGTVGDIEGQPFLEAIRQMRNDTGRDNVLYIHVTLLPYIQSTQELKTKPTQHSVNELRRIGIQPDIIVCRADYPISEGIRDKISLFCDVERKAVIFMPTVSTIYEVPLKLESEGVGDLLVSRLHLNASPSDLSVWRGLVEKIKEPTPTVRIALVGKYVELKDAYYSVRESLCHAAIHNGRDIQIDWVHAEDIEKNGPEEYLKHVQGIIIPGGFGIRGIEGMISAVKYARENGIPYLGLCLGMQVMVIEFARYVLGSDKAHSTEFEPDSPYPVIDLLPEQRGVDSKGGTMRLGNYPCVIQPGTMAGQAYGNNLINERHRHRFEFNNDYRDTLSKAGMLFSGLSPDGKLVEICEVTGHPFMMGSQFHPEFLSRPNRPHPLFREFINAAKKVIRDGEQPSLPLSP</sequence>
<gene>
    <name evidence="1" type="primary">pyrG</name>
    <name type="ordered locus">DehaBAV1_1217</name>
</gene>
<reference key="1">
    <citation type="submission" date="2007-05" db="EMBL/GenBank/DDBJ databases">
        <title>Complete sequence of Dehalococcoides sp. BAV1.</title>
        <authorList>
            <consortium name="US DOE Joint Genome Institute"/>
            <person name="Copeland A."/>
            <person name="Lucas S."/>
            <person name="Lapidus A."/>
            <person name="Barry K."/>
            <person name="Detter J.C."/>
            <person name="Glavina del Rio T."/>
            <person name="Hammon N."/>
            <person name="Israni S."/>
            <person name="Pitluck S."/>
            <person name="Lowry S."/>
            <person name="Clum A."/>
            <person name="Schmutz J."/>
            <person name="Larimer F."/>
            <person name="Land M."/>
            <person name="Hauser L."/>
            <person name="Kyrpides N."/>
            <person name="Kim E."/>
            <person name="Ritalahti K.M."/>
            <person name="Loeffler F."/>
            <person name="Richardson P."/>
        </authorList>
    </citation>
    <scope>NUCLEOTIDE SEQUENCE [LARGE SCALE GENOMIC DNA]</scope>
    <source>
        <strain>ATCC BAA-2100 / JCM 16839 / KCTC 5957 / BAV1</strain>
    </source>
</reference>
<comment type="function">
    <text evidence="1">Catalyzes the ATP-dependent amination of UTP to CTP with either L-glutamine or ammonia as the source of nitrogen. Regulates intracellular CTP levels through interactions with the four ribonucleotide triphosphates.</text>
</comment>
<comment type="catalytic activity">
    <reaction evidence="1">
        <text>UTP + L-glutamine + ATP + H2O = CTP + L-glutamate + ADP + phosphate + 2 H(+)</text>
        <dbReference type="Rhea" id="RHEA:26426"/>
        <dbReference type="ChEBI" id="CHEBI:15377"/>
        <dbReference type="ChEBI" id="CHEBI:15378"/>
        <dbReference type="ChEBI" id="CHEBI:29985"/>
        <dbReference type="ChEBI" id="CHEBI:30616"/>
        <dbReference type="ChEBI" id="CHEBI:37563"/>
        <dbReference type="ChEBI" id="CHEBI:43474"/>
        <dbReference type="ChEBI" id="CHEBI:46398"/>
        <dbReference type="ChEBI" id="CHEBI:58359"/>
        <dbReference type="ChEBI" id="CHEBI:456216"/>
        <dbReference type="EC" id="6.3.4.2"/>
    </reaction>
</comment>
<comment type="catalytic activity">
    <reaction evidence="1">
        <text>L-glutamine + H2O = L-glutamate + NH4(+)</text>
        <dbReference type="Rhea" id="RHEA:15889"/>
        <dbReference type="ChEBI" id="CHEBI:15377"/>
        <dbReference type="ChEBI" id="CHEBI:28938"/>
        <dbReference type="ChEBI" id="CHEBI:29985"/>
        <dbReference type="ChEBI" id="CHEBI:58359"/>
    </reaction>
</comment>
<comment type="catalytic activity">
    <reaction evidence="1">
        <text>UTP + NH4(+) + ATP = CTP + ADP + phosphate + 2 H(+)</text>
        <dbReference type="Rhea" id="RHEA:16597"/>
        <dbReference type="ChEBI" id="CHEBI:15378"/>
        <dbReference type="ChEBI" id="CHEBI:28938"/>
        <dbReference type="ChEBI" id="CHEBI:30616"/>
        <dbReference type="ChEBI" id="CHEBI:37563"/>
        <dbReference type="ChEBI" id="CHEBI:43474"/>
        <dbReference type="ChEBI" id="CHEBI:46398"/>
        <dbReference type="ChEBI" id="CHEBI:456216"/>
    </reaction>
</comment>
<comment type="activity regulation">
    <text evidence="1">Allosterically activated by GTP, when glutamine is the substrate; GTP has no effect on the reaction when ammonia is the substrate. The allosteric effector GTP functions by stabilizing the protein conformation that binds the tetrahedral intermediate(s) formed during glutamine hydrolysis. Inhibited by the product CTP, via allosteric rather than competitive inhibition.</text>
</comment>
<comment type="pathway">
    <text evidence="1">Pyrimidine metabolism; CTP biosynthesis via de novo pathway; CTP from UDP: step 2/2.</text>
</comment>
<comment type="subunit">
    <text evidence="1">Homotetramer.</text>
</comment>
<comment type="miscellaneous">
    <text evidence="1">CTPSs have evolved a hybrid strategy for distinguishing between UTP and CTP. The overlapping regions of the product feedback inhibitory and substrate sites recognize a common feature in both compounds, the triphosphate moiety. To differentiate isosteric substrate and product pyrimidine rings, an additional pocket far from the expected kinase/ligase catalytic site, specifically recognizes the cytosine and ribose portions of the product inhibitor.</text>
</comment>
<comment type="similarity">
    <text evidence="1">Belongs to the CTP synthase family.</text>
</comment>
<evidence type="ECO:0000255" key="1">
    <source>
        <dbReference type="HAMAP-Rule" id="MF_01227"/>
    </source>
</evidence>
<protein>
    <recommendedName>
        <fullName evidence="1">CTP synthase</fullName>
        <ecNumber evidence="1">6.3.4.2</ecNumber>
    </recommendedName>
    <alternativeName>
        <fullName evidence="1">Cytidine 5'-triphosphate synthase</fullName>
    </alternativeName>
    <alternativeName>
        <fullName evidence="1">Cytidine triphosphate synthetase</fullName>
        <shortName evidence="1">CTP synthetase</shortName>
        <shortName evidence="1">CTPS</shortName>
    </alternativeName>
    <alternativeName>
        <fullName evidence="1">UTP--ammonia ligase</fullName>
    </alternativeName>
</protein>